<name>FLIW_CLOBH</name>
<organism>
    <name type="scientific">Clostridium botulinum (strain Hall / ATCC 3502 / NCTC 13319 / Type A)</name>
    <dbReference type="NCBI Taxonomy" id="441771"/>
    <lineage>
        <taxon>Bacteria</taxon>
        <taxon>Bacillati</taxon>
        <taxon>Bacillota</taxon>
        <taxon>Clostridia</taxon>
        <taxon>Eubacteriales</taxon>
        <taxon>Clostridiaceae</taxon>
        <taxon>Clostridium</taxon>
    </lineage>
</organism>
<comment type="function">
    <text evidence="1">Acts as an anti-CsrA protein, binds CsrA and prevents it from repressing translation of its target genes, one of which is flagellin. Binds to flagellin and participates in the assembly of the flagellum.</text>
</comment>
<comment type="subunit">
    <text evidence="1">Interacts with translational regulator CsrA and flagellin(s).</text>
</comment>
<comment type="subcellular location">
    <subcellularLocation>
        <location evidence="1">Cytoplasm</location>
    </subcellularLocation>
</comment>
<comment type="similarity">
    <text evidence="1">Belongs to the FliW family.</text>
</comment>
<feature type="chain" id="PRO_1000065814" description="Flagellar assembly factor FliW">
    <location>
        <begin position="1"/>
        <end position="143"/>
    </location>
</feature>
<proteinExistence type="inferred from homology"/>
<keyword id="KW-1005">Bacterial flagellum biogenesis</keyword>
<keyword id="KW-0143">Chaperone</keyword>
<keyword id="KW-0963">Cytoplasm</keyword>
<keyword id="KW-1185">Reference proteome</keyword>
<keyword id="KW-0810">Translation regulation</keyword>
<gene>
    <name evidence="1" type="primary">fliW</name>
    <name type="ordered locus">CBO2738</name>
    <name type="ordered locus">CLC_2612</name>
</gene>
<evidence type="ECO:0000255" key="1">
    <source>
        <dbReference type="HAMAP-Rule" id="MF_01185"/>
    </source>
</evidence>
<protein>
    <recommendedName>
        <fullName evidence="1">Flagellar assembly factor FliW</fullName>
    </recommendedName>
</protein>
<accession>A5I5H2</accession>
<accession>A7G6N5</accession>
<reference key="1">
    <citation type="journal article" date="2007" name="Genome Res.">
        <title>Genome sequence of a proteolytic (Group I) Clostridium botulinum strain Hall A and comparative analysis of the clostridial genomes.</title>
        <authorList>
            <person name="Sebaihia M."/>
            <person name="Peck M.W."/>
            <person name="Minton N.P."/>
            <person name="Thomson N.R."/>
            <person name="Holden M.T.G."/>
            <person name="Mitchell W.J."/>
            <person name="Carter A.T."/>
            <person name="Bentley S.D."/>
            <person name="Mason D.R."/>
            <person name="Crossman L."/>
            <person name="Paul C.J."/>
            <person name="Ivens A."/>
            <person name="Wells-Bennik M.H.J."/>
            <person name="Davis I.J."/>
            <person name="Cerdeno-Tarraga A.M."/>
            <person name="Churcher C."/>
            <person name="Quail M.A."/>
            <person name="Chillingworth T."/>
            <person name="Feltwell T."/>
            <person name="Fraser A."/>
            <person name="Goodhead I."/>
            <person name="Hance Z."/>
            <person name="Jagels K."/>
            <person name="Larke N."/>
            <person name="Maddison M."/>
            <person name="Moule S."/>
            <person name="Mungall K."/>
            <person name="Norbertczak H."/>
            <person name="Rabbinowitsch E."/>
            <person name="Sanders M."/>
            <person name="Simmonds M."/>
            <person name="White B."/>
            <person name="Whithead S."/>
            <person name="Parkhill J."/>
        </authorList>
    </citation>
    <scope>NUCLEOTIDE SEQUENCE [LARGE SCALE GENOMIC DNA]</scope>
    <source>
        <strain>Hall / ATCC 3502 / NCTC 13319 / Type A</strain>
    </source>
</reference>
<reference key="2">
    <citation type="journal article" date="2007" name="PLoS ONE">
        <title>Analysis of the neurotoxin complex genes in Clostridium botulinum A1-A4 and B1 strains: BoNT/A3, /Ba4 and /B1 clusters are located within plasmids.</title>
        <authorList>
            <person name="Smith T.J."/>
            <person name="Hill K.K."/>
            <person name="Foley B.T."/>
            <person name="Detter J.C."/>
            <person name="Munk A.C."/>
            <person name="Bruce D.C."/>
            <person name="Doggett N.A."/>
            <person name="Smith L.A."/>
            <person name="Marks J.D."/>
            <person name="Xie G."/>
            <person name="Brettin T.S."/>
        </authorList>
    </citation>
    <scope>NUCLEOTIDE SEQUENCE [LARGE SCALE GENOMIC DNA]</scope>
    <source>
        <strain>Hall / ATCC 3502 / NCTC 13319 / Type A</strain>
    </source>
</reference>
<dbReference type="EMBL" id="CP000727">
    <property type="protein sequence ID" value="ABS38611.1"/>
    <property type="molecule type" value="Genomic_DNA"/>
</dbReference>
<dbReference type="EMBL" id="AM412317">
    <property type="protein sequence ID" value="CAL84299.1"/>
    <property type="molecule type" value="Genomic_DNA"/>
</dbReference>
<dbReference type="RefSeq" id="WP_011987029.1">
    <property type="nucleotide sequence ID" value="NC_009698.1"/>
</dbReference>
<dbReference type="RefSeq" id="YP_001255237.1">
    <property type="nucleotide sequence ID" value="NC_009495.1"/>
</dbReference>
<dbReference type="RefSeq" id="YP_001388450.1">
    <property type="nucleotide sequence ID" value="NC_009698.1"/>
</dbReference>
<dbReference type="SMR" id="A5I5H2"/>
<dbReference type="GeneID" id="5186937"/>
<dbReference type="KEGG" id="cbh:CLC_2612"/>
<dbReference type="KEGG" id="cbo:CBO2738"/>
<dbReference type="PATRIC" id="fig|413999.7.peg.2721"/>
<dbReference type="HOGENOM" id="CLU_112356_0_2_9"/>
<dbReference type="PRO" id="PR:A5I5H2"/>
<dbReference type="Proteomes" id="UP000001986">
    <property type="component" value="Chromosome"/>
</dbReference>
<dbReference type="GO" id="GO:0005737">
    <property type="term" value="C:cytoplasm"/>
    <property type="evidence" value="ECO:0007669"/>
    <property type="project" value="UniProtKB-SubCell"/>
</dbReference>
<dbReference type="GO" id="GO:0044780">
    <property type="term" value="P:bacterial-type flagellum assembly"/>
    <property type="evidence" value="ECO:0007669"/>
    <property type="project" value="UniProtKB-UniRule"/>
</dbReference>
<dbReference type="GO" id="GO:0006417">
    <property type="term" value="P:regulation of translation"/>
    <property type="evidence" value="ECO:0007669"/>
    <property type="project" value="UniProtKB-KW"/>
</dbReference>
<dbReference type="Gene3D" id="2.30.290.10">
    <property type="entry name" value="BH3618-like"/>
    <property type="match status" value="1"/>
</dbReference>
<dbReference type="HAMAP" id="MF_01185">
    <property type="entry name" value="FliW"/>
    <property type="match status" value="1"/>
</dbReference>
<dbReference type="InterPro" id="IPR003775">
    <property type="entry name" value="Flagellar_assembly_factor_FliW"/>
</dbReference>
<dbReference type="InterPro" id="IPR024046">
    <property type="entry name" value="Flagellar_assmbl_FliW_dom_sf"/>
</dbReference>
<dbReference type="NCBIfam" id="NF009793">
    <property type="entry name" value="PRK13285.1-1"/>
    <property type="match status" value="1"/>
</dbReference>
<dbReference type="PANTHER" id="PTHR39190">
    <property type="entry name" value="FLAGELLAR ASSEMBLY FACTOR FLIW"/>
    <property type="match status" value="1"/>
</dbReference>
<dbReference type="PANTHER" id="PTHR39190:SF1">
    <property type="entry name" value="FLAGELLAR ASSEMBLY FACTOR FLIW"/>
    <property type="match status" value="1"/>
</dbReference>
<dbReference type="Pfam" id="PF02623">
    <property type="entry name" value="FliW"/>
    <property type="match status" value="1"/>
</dbReference>
<dbReference type="SUPFAM" id="SSF141457">
    <property type="entry name" value="BH3618-like"/>
    <property type="match status" value="1"/>
</dbReference>
<sequence length="143" mass="16662">MKLNTKYHGCIEYEEKDVIYFQKGIPGFEELNKFIIFPVEDNEVFLVFHSIENEDIGIIVTSPFNIENNYEIQLEEEQITNLKLQDEKDALVLNTVTLDSDIDKITVNLRAPIIINIKEKIGEQIIINSDKYKVKHSLFKEEA</sequence>